<comment type="function">
    <text evidence="1">Binds to the 23S rRNA.</text>
</comment>
<comment type="similarity">
    <text evidence="1">Belongs to the bacterial ribosomal protein bL9 family.</text>
</comment>
<protein>
    <recommendedName>
        <fullName evidence="1">Large ribosomal subunit protein bL9</fullName>
    </recommendedName>
    <alternativeName>
        <fullName evidence="2">50S ribosomal protein L9</fullName>
    </alternativeName>
</protein>
<keyword id="KW-1185">Reference proteome</keyword>
<keyword id="KW-0687">Ribonucleoprotein</keyword>
<keyword id="KW-0689">Ribosomal protein</keyword>
<keyword id="KW-0694">RNA-binding</keyword>
<keyword id="KW-0699">rRNA-binding</keyword>
<evidence type="ECO:0000255" key="1">
    <source>
        <dbReference type="HAMAP-Rule" id="MF_00503"/>
    </source>
</evidence>
<evidence type="ECO:0000305" key="2"/>
<proteinExistence type="inferred from homology"/>
<accession>B7JUZ9</accession>
<feature type="chain" id="PRO_1000126898" description="Large ribosomal subunit protein bL9">
    <location>
        <begin position="1"/>
        <end position="152"/>
    </location>
</feature>
<organism>
    <name type="scientific">Rippkaea orientalis (strain PCC 8801 / RF-1)</name>
    <name type="common">Cyanothece sp. (strain PCC 8801)</name>
    <dbReference type="NCBI Taxonomy" id="41431"/>
    <lineage>
        <taxon>Bacteria</taxon>
        <taxon>Bacillati</taxon>
        <taxon>Cyanobacteriota</taxon>
        <taxon>Cyanophyceae</taxon>
        <taxon>Oscillatoriophycideae</taxon>
        <taxon>Chroococcales</taxon>
        <taxon>Aphanothecaceae</taxon>
        <taxon>Rippkaea</taxon>
        <taxon>Rippkaea orientalis</taxon>
    </lineage>
</organism>
<dbReference type="EMBL" id="CP001287">
    <property type="protein sequence ID" value="ACK66851.1"/>
    <property type="molecule type" value="Genomic_DNA"/>
</dbReference>
<dbReference type="RefSeq" id="WP_012596117.1">
    <property type="nucleotide sequence ID" value="NC_011726.1"/>
</dbReference>
<dbReference type="SMR" id="B7JUZ9"/>
<dbReference type="STRING" id="41431.PCC8801_2852"/>
<dbReference type="KEGG" id="cyp:PCC8801_2852"/>
<dbReference type="eggNOG" id="COG0359">
    <property type="taxonomic scope" value="Bacteria"/>
</dbReference>
<dbReference type="HOGENOM" id="CLU_078938_5_1_3"/>
<dbReference type="OrthoDB" id="9788336at2"/>
<dbReference type="Proteomes" id="UP000008204">
    <property type="component" value="Chromosome"/>
</dbReference>
<dbReference type="GO" id="GO:1990904">
    <property type="term" value="C:ribonucleoprotein complex"/>
    <property type="evidence" value="ECO:0007669"/>
    <property type="project" value="UniProtKB-KW"/>
</dbReference>
<dbReference type="GO" id="GO:0005840">
    <property type="term" value="C:ribosome"/>
    <property type="evidence" value="ECO:0007669"/>
    <property type="project" value="UniProtKB-KW"/>
</dbReference>
<dbReference type="GO" id="GO:0019843">
    <property type="term" value="F:rRNA binding"/>
    <property type="evidence" value="ECO:0007669"/>
    <property type="project" value="UniProtKB-UniRule"/>
</dbReference>
<dbReference type="GO" id="GO:0003735">
    <property type="term" value="F:structural constituent of ribosome"/>
    <property type="evidence" value="ECO:0007669"/>
    <property type="project" value="InterPro"/>
</dbReference>
<dbReference type="GO" id="GO:0006412">
    <property type="term" value="P:translation"/>
    <property type="evidence" value="ECO:0007669"/>
    <property type="project" value="UniProtKB-UniRule"/>
</dbReference>
<dbReference type="FunFam" id="3.40.5.10:FF:000003">
    <property type="entry name" value="50S ribosomal protein L9"/>
    <property type="match status" value="1"/>
</dbReference>
<dbReference type="Gene3D" id="3.10.430.100">
    <property type="entry name" value="Ribosomal protein L9, C-terminal domain"/>
    <property type="match status" value="1"/>
</dbReference>
<dbReference type="Gene3D" id="3.40.5.10">
    <property type="entry name" value="Ribosomal protein L9, N-terminal domain"/>
    <property type="match status" value="1"/>
</dbReference>
<dbReference type="HAMAP" id="MF_00503">
    <property type="entry name" value="Ribosomal_bL9"/>
    <property type="match status" value="1"/>
</dbReference>
<dbReference type="InterPro" id="IPR000244">
    <property type="entry name" value="Ribosomal_bL9"/>
</dbReference>
<dbReference type="InterPro" id="IPR009027">
    <property type="entry name" value="Ribosomal_bL9/RNase_H1_N"/>
</dbReference>
<dbReference type="InterPro" id="IPR020594">
    <property type="entry name" value="Ribosomal_bL9_bac/chp"/>
</dbReference>
<dbReference type="InterPro" id="IPR020069">
    <property type="entry name" value="Ribosomal_bL9_C"/>
</dbReference>
<dbReference type="InterPro" id="IPR036791">
    <property type="entry name" value="Ribosomal_bL9_C_sf"/>
</dbReference>
<dbReference type="InterPro" id="IPR020070">
    <property type="entry name" value="Ribosomal_bL9_N"/>
</dbReference>
<dbReference type="InterPro" id="IPR036935">
    <property type="entry name" value="Ribosomal_bL9_N_sf"/>
</dbReference>
<dbReference type="NCBIfam" id="TIGR00158">
    <property type="entry name" value="L9"/>
    <property type="match status" value="1"/>
</dbReference>
<dbReference type="PANTHER" id="PTHR21368">
    <property type="entry name" value="50S RIBOSOMAL PROTEIN L9"/>
    <property type="match status" value="1"/>
</dbReference>
<dbReference type="Pfam" id="PF03948">
    <property type="entry name" value="Ribosomal_L9_C"/>
    <property type="match status" value="1"/>
</dbReference>
<dbReference type="Pfam" id="PF01281">
    <property type="entry name" value="Ribosomal_L9_N"/>
    <property type="match status" value="1"/>
</dbReference>
<dbReference type="SUPFAM" id="SSF55658">
    <property type="entry name" value="L9 N-domain-like"/>
    <property type="match status" value="1"/>
</dbReference>
<dbReference type="SUPFAM" id="SSF55653">
    <property type="entry name" value="Ribosomal protein L9 C-domain"/>
    <property type="match status" value="1"/>
</dbReference>
<dbReference type="PROSITE" id="PS00651">
    <property type="entry name" value="RIBOSOMAL_L9"/>
    <property type="match status" value="1"/>
</dbReference>
<gene>
    <name evidence="1" type="primary">rplI</name>
    <name evidence="1" type="synonym">rpl9</name>
    <name type="ordered locus">PCC8801_2852</name>
</gene>
<reference key="1">
    <citation type="journal article" date="2011" name="MBio">
        <title>Novel metabolic attributes of the genus Cyanothece, comprising a group of unicellular nitrogen-fixing Cyanobacteria.</title>
        <authorList>
            <person name="Bandyopadhyay A."/>
            <person name="Elvitigala T."/>
            <person name="Welsh E."/>
            <person name="Stockel J."/>
            <person name="Liberton M."/>
            <person name="Min H."/>
            <person name="Sherman L.A."/>
            <person name="Pakrasi H.B."/>
        </authorList>
    </citation>
    <scope>NUCLEOTIDE SEQUENCE [LARGE SCALE GENOMIC DNA]</scope>
    <source>
        <strain>PCC 8801 / RF-1</strain>
    </source>
</reference>
<name>RL9_RIPO1</name>
<sequence length="152" mass="16682">MSKRVQIVLNKTINKLGQTGDLVEVAPGYARNYLIPQGMGVIATPGILRQVEQRKEKEMQRLLAEKQAAEARKVALSTIGRFTIRKQVGEGEAIFGTVTTQEVADAIQAATNQEVDRRGITLPEISQTGFYKATVKLHPEVTAEIEIQVAPL</sequence>